<name>RIMP_NOSP7</name>
<reference key="1">
    <citation type="journal article" date="2013" name="Plant Physiol.">
        <title>A Nostoc punctiforme Sugar Transporter Necessary to Establish a Cyanobacterium-Plant Symbiosis.</title>
        <authorList>
            <person name="Ekman M."/>
            <person name="Picossi S."/>
            <person name="Campbell E.L."/>
            <person name="Meeks J.C."/>
            <person name="Flores E."/>
        </authorList>
    </citation>
    <scope>NUCLEOTIDE SEQUENCE [LARGE SCALE GENOMIC DNA]</scope>
    <source>
        <strain>ATCC 29133 / PCC 73102</strain>
    </source>
</reference>
<organism>
    <name type="scientific">Nostoc punctiforme (strain ATCC 29133 / PCC 73102)</name>
    <dbReference type="NCBI Taxonomy" id="63737"/>
    <lineage>
        <taxon>Bacteria</taxon>
        <taxon>Bacillati</taxon>
        <taxon>Cyanobacteriota</taxon>
        <taxon>Cyanophyceae</taxon>
        <taxon>Nostocales</taxon>
        <taxon>Nostocaceae</taxon>
        <taxon>Nostoc</taxon>
    </lineage>
</organism>
<dbReference type="EMBL" id="CP001037">
    <property type="protein sequence ID" value="ACC84074.1"/>
    <property type="molecule type" value="Genomic_DNA"/>
</dbReference>
<dbReference type="RefSeq" id="WP_012412017.1">
    <property type="nucleotide sequence ID" value="NC_010628.1"/>
</dbReference>
<dbReference type="SMR" id="B2J958"/>
<dbReference type="STRING" id="63737.Npun_R5776"/>
<dbReference type="EnsemblBacteria" id="ACC84074">
    <property type="protein sequence ID" value="ACC84074"/>
    <property type="gene ID" value="Npun_R5776"/>
</dbReference>
<dbReference type="KEGG" id="npu:Npun_R5776"/>
<dbReference type="eggNOG" id="COG0779">
    <property type="taxonomic scope" value="Bacteria"/>
</dbReference>
<dbReference type="HOGENOM" id="CLU_070525_2_1_3"/>
<dbReference type="OrthoDB" id="9805006at2"/>
<dbReference type="PhylomeDB" id="B2J958"/>
<dbReference type="Proteomes" id="UP000001191">
    <property type="component" value="Chromosome"/>
</dbReference>
<dbReference type="GO" id="GO:0005829">
    <property type="term" value="C:cytosol"/>
    <property type="evidence" value="ECO:0007669"/>
    <property type="project" value="TreeGrafter"/>
</dbReference>
<dbReference type="GO" id="GO:0000028">
    <property type="term" value="P:ribosomal small subunit assembly"/>
    <property type="evidence" value="ECO:0007669"/>
    <property type="project" value="TreeGrafter"/>
</dbReference>
<dbReference type="GO" id="GO:0006412">
    <property type="term" value="P:translation"/>
    <property type="evidence" value="ECO:0007669"/>
    <property type="project" value="TreeGrafter"/>
</dbReference>
<dbReference type="CDD" id="cd01734">
    <property type="entry name" value="YlxS_C"/>
    <property type="match status" value="1"/>
</dbReference>
<dbReference type="FunFam" id="3.30.300.70:FF:000001">
    <property type="entry name" value="Ribosome maturation factor RimP"/>
    <property type="match status" value="1"/>
</dbReference>
<dbReference type="Gene3D" id="2.30.30.180">
    <property type="entry name" value="Ribosome maturation factor RimP, C-terminal domain"/>
    <property type="match status" value="1"/>
</dbReference>
<dbReference type="Gene3D" id="3.30.300.70">
    <property type="entry name" value="RimP-like superfamily, N-terminal"/>
    <property type="match status" value="1"/>
</dbReference>
<dbReference type="HAMAP" id="MF_01077">
    <property type="entry name" value="RimP"/>
    <property type="match status" value="1"/>
</dbReference>
<dbReference type="InterPro" id="IPR003728">
    <property type="entry name" value="Ribosome_maturation_RimP"/>
</dbReference>
<dbReference type="InterPro" id="IPR028998">
    <property type="entry name" value="RimP_C"/>
</dbReference>
<dbReference type="InterPro" id="IPR036847">
    <property type="entry name" value="RimP_C_sf"/>
</dbReference>
<dbReference type="InterPro" id="IPR028989">
    <property type="entry name" value="RimP_N"/>
</dbReference>
<dbReference type="InterPro" id="IPR035956">
    <property type="entry name" value="RimP_N_sf"/>
</dbReference>
<dbReference type="NCBIfam" id="NF000935">
    <property type="entry name" value="PRK00092.3-3"/>
    <property type="match status" value="1"/>
</dbReference>
<dbReference type="PANTHER" id="PTHR33867">
    <property type="entry name" value="RIBOSOME MATURATION FACTOR RIMP"/>
    <property type="match status" value="1"/>
</dbReference>
<dbReference type="PANTHER" id="PTHR33867:SF1">
    <property type="entry name" value="RIBOSOME MATURATION FACTOR RIMP"/>
    <property type="match status" value="1"/>
</dbReference>
<dbReference type="Pfam" id="PF17384">
    <property type="entry name" value="DUF150_C"/>
    <property type="match status" value="1"/>
</dbReference>
<dbReference type="Pfam" id="PF02576">
    <property type="entry name" value="RimP_N"/>
    <property type="match status" value="1"/>
</dbReference>
<dbReference type="SUPFAM" id="SSF74942">
    <property type="entry name" value="YhbC-like, C-terminal domain"/>
    <property type="match status" value="1"/>
</dbReference>
<dbReference type="SUPFAM" id="SSF75420">
    <property type="entry name" value="YhbC-like, N-terminal domain"/>
    <property type="match status" value="1"/>
</dbReference>
<keyword id="KW-0963">Cytoplasm</keyword>
<keyword id="KW-1185">Reference proteome</keyword>
<keyword id="KW-0690">Ribosome biogenesis</keyword>
<protein>
    <recommendedName>
        <fullName evidence="1">Ribosome maturation factor RimP</fullName>
    </recommendedName>
</protein>
<sequence length="153" mass="17210">MAHPLVPQIIDLATPVAEELGLEVVGVVFHTHQSPPVLRVDIRNPQQDTGLNDCERMSRALEASLDAAEIVPDTYVLEVSSPGISRQLVTDREFISFKGFPVIISTTPPYDGQQEWIGQLIRRDEITLYLNQKGRVVEIPRSLITKVQLDERR</sequence>
<evidence type="ECO:0000255" key="1">
    <source>
        <dbReference type="HAMAP-Rule" id="MF_01077"/>
    </source>
</evidence>
<accession>B2J958</accession>
<proteinExistence type="inferred from homology"/>
<comment type="function">
    <text evidence="1">Required for maturation of 30S ribosomal subunits.</text>
</comment>
<comment type="subcellular location">
    <subcellularLocation>
        <location evidence="1">Cytoplasm</location>
    </subcellularLocation>
</comment>
<comment type="similarity">
    <text evidence="1">Belongs to the RimP family.</text>
</comment>
<feature type="chain" id="PRO_1000136782" description="Ribosome maturation factor RimP">
    <location>
        <begin position="1"/>
        <end position="153"/>
    </location>
</feature>
<gene>
    <name evidence="1" type="primary">rimP</name>
    <name type="ordered locus">Npun_R5776</name>
</gene>